<dbReference type="EMBL" id="CP000112">
    <property type="protein sequence ID" value="ABB37933.1"/>
    <property type="molecule type" value="Genomic_DNA"/>
</dbReference>
<dbReference type="RefSeq" id="WP_011367159.1">
    <property type="nucleotide sequence ID" value="NC_007519.1"/>
</dbReference>
<dbReference type="SMR" id="Q313G3"/>
<dbReference type="STRING" id="207559.Dde_1132"/>
<dbReference type="KEGG" id="dde:Dde_1132"/>
<dbReference type="eggNOG" id="COG0264">
    <property type="taxonomic scope" value="Bacteria"/>
</dbReference>
<dbReference type="HOGENOM" id="CLU_047155_1_1_7"/>
<dbReference type="Proteomes" id="UP000002710">
    <property type="component" value="Chromosome"/>
</dbReference>
<dbReference type="GO" id="GO:0005737">
    <property type="term" value="C:cytoplasm"/>
    <property type="evidence" value="ECO:0007669"/>
    <property type="project" value="UniProtKB-SubCell"/>
</dbReference>
<dbReference type="GO" id="GO:0003746">
    <property type="term" value="F:translation elongation factor activity"/>
    <property type="evidence" value="ECO:0007669"/>
    <property type="project" value="UniProtKB-UniRule"/>
</dbReference>
<dbReference type="CDD" id="cd14275">
    <property type="entry name" value="UBA_EF-Ts"/>
    <property type="match status" value="1"/>
</dbReference>
<dbReference type="FunFam" id="1.10.286.20:FF:000001">
    <property type="entry name" value="Elongation factor Ts"/>
    <property type="match status" value="1"/>
</dbReference>
<dbReference type="FunFam" id="1.10.8.10:FF:000001">
    <property type="entry name" value="Elongation factor Ts"/>
    <property type="match status" value="1"/>
</dbReference>
<dbReference type="Gene3D" id="1.10.286.20">
    <property type="match status" value="1"/>
</dbReference>
<dbReference type="Gene3D" id="1.10.8.10">
    <property type="entry name" value="DNA helicase RuvA subunit, C-terminal domain"/>
    <property type="match status" value="1"/>
</dbReference>
<dbReference type="Gene3D" id="3.30.479.20">
    <property type="entry name" value="Elongation factor Ts, dimerisation domain"/>
    <property type="match status" value="1"/>
</dbReference>
<dbReference type="HAMAP" id="MF_00050">
    <property type="entry name" value="EF_Ts"/>
    <property type="match status" value="1"/>
</dbReference>
<dbReference type="InterPro" id="IPR036402">
    <property type="entry name" value="EF-Ts_dimer_sf"/>
</dbReference>
<dbReference type="InterPro" id="IPR001816">
    <property type="entry name" value="Transl_elong_EFTs/EF1B"/>
</dbReference>
<dbReference type="InterPro" id="IPR014039">
    <property type="entry name" value="Transl_elong_EFTs/EF1B_dimer"/>
</dbReference>
<dbReference type="InterPro" id="IPR018101">
    <property type="entry name" value="Transl_elong_Ts_CS"/>
</dbReference>
<dbReference type="InterPro" id="IPR009060">
    <property type="entry name" value="UBA-like_sf"/>
</dbReference>
<dbReference type="NCBIfam" id="TIGR00116">
    <property type="entry name" value="tsf"/>
    <property type="match status" value="1"/>
</dbReference>
<dbReference type="PANTHER" id="PTHR11741">
    <property type="entry name" value="ELONGATION FACTOR TS"/>
    <property type="match status" value="1"/>
</dbReference>
<dbReference type="PANTHER" id="PTHR11741:SF0">
    <property type="entry name" value="ELONGATION FACTOR TS, MITOCHONDRIAL"/>
    <property type="match status" value="1"/>
</dbReference>
<dbReference type="Pfam" id="PF00889">
    <property type="entry name" value="EF_TS"/>
    <property type="match status" value="1"/>
</dbReference>
<dbReference type="SUPFAM" id="SSF54713">
    <property type="entry name" value="Elongation factor Ts (EF-Ts), dimerisation domain"/>
    <property type="match status" value="1"/>
</dbReference>
<dbReference type="SUPFAM" id="SSF46934">
    <property type="entry name" value="UBA-like"/>
    <property type="match status" value="1"/>
</dbReference>
<dbReference type="PROSITE" id="PS01127">
    <property type="entry name" value="EF_TS_2"/>
    <property type="match status" value="1"/>
</dbReference>
<gene>
    <name evidence="1" type="primary">tsf</name>
    <name type="ordered locus">Dde_1132</name>
</gene>
<evidence type="ECO:0000255" key="1">
    <source>
        <dbReference type="HAMAP-Rule" id="MF_00050"/>
    </source>
</evidence>
<proteinExistence type="inferred from homology"/>
<accession>Q313G3</accession>
<sequence length="198" mass="21895">MAAITAAMVKELREKTAAGMMDCKKALQECDGDEAKAVDWLRQKGLSKAAKKADRATSEGLIGSYIHSNGKIGVMVELKCETDFVARNEQFIELAKNLAMQIAATNPVAVDENGVDAELIERERAVYREKALAEGKPENIVEKIVDGAIKKYYKEVCLLEQPFIRDDKKVIRDLLNDTIATLGENITVGRFCRFQLGA</sequence>
<reference key="1">
    <citation type="journal article" date="2011" name="J. Bacteriol.">
        <title>Complete genome sequence and updated annotation of Desulfovibrio alaskensis G20.</title>
        <authorList>
            <person name="Hauser L.J."/>
            <person name="Land M.L."/>
            <person name="Brown S.D."/>
            <person name="Larimer F."/>
            <person name="Keller K.L."/>
            <person name="Rapp-Giles B.J."/>
            <person name="Price M.N."/>
            <person name="Lin M."/>
            <person name="Bruce D.C."/>
            <person name="Detter J.C."/>
            <person name="Tapia R."/>
            <person name="Han C.S."/>
            <person name="Goodwin L.A."/>
            <person name="Cheng J.F."/>
            <person name="Pitluck S."/>
            <person name="Copeland A."/>
            <person name="Lucas S."/>
            <person name="Nolan M."/>
            <person name="Lapidus A.L."/>
            <person name="Palumbo A.V."/>
            <person name="Wall J.D."/>
        </authorList>
    </citation>
    <scope>NUCLEOTIDE SEQUENCE [LARGE SCALE GENOMIC DNA]</scope>
    <source>
        <strain>ATCC BAA-1058 / DSM 17464 / G20</strain>
    </source>
</reference>
<comment type="function">
    <text evidence="1">Associates with the EF-Tu.GDP complex and induces the exchange of GDP to GTP. It remains bound to the aminoacyl-tRNA.EF-Tu.GTP complex up to the GTP hydrolysis stage on the ribosome.</text>
</comment>
<comment type="subcellular location">
    <subcellularLocation>
        <location evidence="1">Cytoplasm</location>
    </subcellularLocation>
</comment>
<comment type="similarity">
    <text evidence="1">Belongs to the EF-Ts family.</text>
</comment>
<keyword id="KW-0963">Cytoplasm</keyword>
<keyword id="KW-0251">Elongation factor</keyword>
<keyword id="KW-0648">Protein biosynthesis</keyword>
<keyword id="KW-1185">Reference proteome</keyword>
<name>EFTS_OLEA2</name>
<protein>
    <recommendedName>
        <fullName evidence="1">Elongation factor Ts</fullName>
        <shortName evidence="1">EF-Ts</shortName>
    </recommendedName>
</protein>
<feature type="chain" id="PRO_0000241478" description="Elongation factor Ts">
    <location>
        <begin position="1"/>
        <end position="198"/>
    </location>
</feature>
<feature type="region of interest" description="Involved in Mg(2+) ion dislocation from EF-Tu" evidence="1">
    <location>
        <begin position="82"/>
        <end position="85"/>
    </location>
</feature>
<organism>
    <name type="scientific">Oleidesulfovibrio alaskensis (strain ATCC BAA-1058 / DSM 17464 / G20)</name>
    <name type="common">Desulfovibrio alaskensis</name>
    <dbReference type="NCBI Taxonomy" id="207559"/>
    <lineage>
        <taxon>Bacteria</taxon>
        <taxon>Pseudomonadati</taxon>
        <taxon>Thermodesulfobacteriota</taxon>
        <taxon>Desulfovibrionia</taxon>
        <taxon>Desulfovibrionales</taxon>
        <taxon>Desulfovibrionaceae</taxon>
        <taxon>Oleidesulfovibrio</taxon>
    </lineage>
</organism>